<organism>
    <name type="scientific">Borreliella burgdorferi (strain ATCC 35210 / DSM 4680 / CIP 102532 / B31)</name>
    <name type="common">Borrelia burgdorferi</name>
    <dbReference type="NCBI Taxonomy" id="224326"/>
    <lineage>
        <taxon>Bacteria</taxon>
        <taxon>Pseudomonadati</taxon>
        <taxon>Spirochaetota</taxon>
        <taxon>Spirochaetia</taxon>
        <taxon>Spirochaetales</taxon>
        <taxon>Borreliaceae</taxon>
        <taxon>Borreliella</taxon>
    </lineage>
</organism>
<gene>
    <name evidence="1" type="primary">ade</name>
    <name type="ordered locus">BB_K17</name>
</gene>
<dbReference type="EC" id="3.5.4.2" evidence="1"/>
<dbReference type="EMBL" id="AE000788">
    <property type="protein sequence ID" value="AAC66139.1"/>
    <property type="molecule type" value="Genomic_DNA"/>
</dbReference>
<dbReference type="PIR" id="C70253">
    <property type="entry name" value="C70253"/>
</dbReference>
<dbReference type="RefSeq" id="NP_045591.1">
    <property type="nucleotide sequence ID" value="NC_001855.1"/>
</dbReference>
<dbReference type="RefSeq" id="WP_010890337.1">
    <property type="nucleotide sequence ID" value="NC_001855.1"/>
</dbReference>
<dbReference type="SMR" id="O50821"/>
<dbReference type="EnsemblBacteria" id="AAC66139">
    <property type="protein sequence ID" value="AAC66139"/>
    <property type="gene ID" value="BB_K17"/>
</dbReference>
<dbReference type="KEGG" id="bbu:BB_K17"/>
<dbReference type="PATRIC" id="fig|224326.49.peg.1437"/>
<dbReference type="HOGENOM" id="CLU_027935_0_0_12"/>
<dbReference type="OrthoDB" id="9775607at2"/>
<dbReference type="Proteomes" id="UP000001807">
    <property type="component" value="Plasmid lp36"/>
</dbReference>
<dbReference type="GO" id="GO:0000034">
    <property type="term" value="F:adenine deaminase activity"/>
    <property type="evidence" value="ECO:0007669"/>
    <property type="project" value="UniProtKB-UniRule"/>
</dbReference>
<dbReference type="GO" id="GO:0006146">
    <property type="term" value="P:adenine catabolic process"/>
    <property type="evidence" value="ECO:0007669"/>
    <property type="project" value="InterPro"/>
</dbReference>
<dbReference type="CDD" id="cd01295">
    <property type="entry name" value="AdeC"/>
    <property type="match status" value="1"/>
</dbReference>
<dbReference type="Gene3D" id="3.20.20.140">
    <property type="entry name" value="Metal-dependent hydrolases"/>
    <property type="match status" value="1"/>
</dbReference>
<dbReference type="Gene3D" id="2.30.40.10">
    <property type="entry name" value="Urease, subunit C, domain 1"/>
    <property type="match status" value="1"/>
</dbReference>
<dbReference type="HAMAP" id="MF_01518">
    <property type="entry name" value="Adenine_deamin"/>
    <property type="match status" value="1"/>
</dbReference>
<dbReference type="InterPro" id="IPR006679">
    <property type="entry name" value="Adenine_deam"/>
</dbReference>
<dbReference type="InterPro" id="IPR026912">
    <property type="entry name" value="Adenine_deam_C"/>
</dbReference>
<dbReference type="InterPro" id="IPR006680">
    <property type="entry name" value="Amidohydro-rel"/>
</dbReference>
<dbReference type="InterPro" id="IPR011059">
    <property type="entry name" value="Metal-dep_hydrolase_composite"/>
</dbReference>
<dbReference type="InterPro" id="IPR032466">
    <property type="entry name" value="Metal_Hydrolase"/>
</dbReference>
<dbReference type="NCBIfam" id="TIGR01178">
    <property type="entry name" value="ade"/>
    <property type="match status" value="1"/>
</dbReference>
<dbReference type="PANTHER" id="PTHR11113:SF2">
    <property type="entry name" value="ADENINE DEAMINASE"/>
    <property type="match status" value="1"/>
</dbReference>
<dbReference type="PANTHER" id="PTHR11113">
    <property type="entry name" value="N-ACETYLGLUCOSAMINE-6-PHOSPHATE DEACETYLASE"/>
    <property type="match status" value="1"/>
</dbReference>
<dbReference type="Pfam" id="PF13382">
    <property type="entry name" value="Adenine_deam_C"/>
    <property type="match status" value="1"/>
</dbReference>
<dbReference type="Pfam" id="PF01979">
    <property type="entry name" value="Amidohydro_1"/>
    <property type="match status" value="1"/>
</dbReference>
<dbReference type="SUPFAM" id="SSF51338">
    <property type="entry name" value="Composite domain of metallo-dependent hydrolases"/>
    <property type="match status" value="1"/>
</dbReference>
<dbReference type="SUPFAM" id="SSF51556">
    <property type="entry name" value="Metallo-dependent hydrolases"/>
    <property type="match status" value="1"/>
</dbReference>
<name>ADEC_BORBU</name>
<proteinExistence type="inferred from homology"/>
<sequence length="548" mass="60864">MDLFKIEANYIDIFNKEIYPASIAIANGHIASIEKINATLDEYVLPGFIDAHIHIESSFLVPSNFAHLVVAHGTVATISDPHEIANVNGIDGINFMINNSKKTEFKFFFGAPSCVPALSQEFETSGYVLNDKDIDELMKLDDIYYLAEVMDFKGVINKDIEIINKINSALKRNKVVDGHAPGLSPNLTLKYASSGISTDHECLTIEDARYKLSLGMKILIREGSAAKNFESLHPLISECSKKYCDSLMFCFDDAHPNDILNGHINLIVARAIKHGHDFFDVLKIACINPVLHYKIPVGLLRIGDPADFIITKDIKTFKINKTYINGKLVFNDGISLIPLINEIPINNFNCSKKSISDFKFSTKNKMIPVIKCISNQIITHKTMIDSNLLAPDFQSNIAEDILKIAIINRYKDNSKISIGFIKNFGIRNGAIGSTVAHDSHNIILVGSNDEYLCKAANTIIQNKGGLCALNNEKTIIMELPISGLMSTLSAERVASQYIKLNDFCKNVLGSRLDDPLMTLSFMSLTVVPHLKINDKGLFDVDSFCFVDY</sequence>
<geneLocation type="plasmid">
    <name>lp36</name>
</geneLocation>
<protein>
    <recommendedName>
        <fullName evidence="1">Adenine deaminase</fullName>
        <shortName evidence="1">Adenase</shortName>
        <shortName evidence="1">Adenine aminase</shortName>
        <ecNumber evidence="1">3.5.4.2</ecNumber>
    </recommendedName>
</protein>
<evidence type="ECO:0000255" key="1">
    <source>
        <dbReference type="HAMAP-Rule" id="MF_01518"/>
    </source>
</evidence>
<reference key="1">
    <citation type="journal article" date="1997" name="Nature">
        <title>Genomic sequence of a Lyme disease spirochaete, Borrelia burgdorferi.</title>
        <authorList>
            <person name="Fraser C.M."/>
            <person name="Casjens S."/>
            <person name="Huang W.M."/>
            <person name="Sutton G.G."/>
            <person name="Clayton R.A."/>
            <person name="Lathigra R."/>
            <person name="White O."/>
            <person name="Ketchum K.A."/>
            <person name="Dodson R.J."/>
            <person name="Hickey E.K."/>
            <person name="Gwinn M.L."/>
            <person name="Dougherty B.A."/>
            <person name="Tomb J.-F."/>
            <person name="Fleischmann R.D."/>
            <person name="Richardson D.L."/>
            <person name="Peterson J.D."/>
            <person name="Kerlavage A.R."/>
            <person name="Quackenbush J."/>
            <person name="Salzberg S.L."/>
            <person name="Hanson M."/>
            <person name="van Vugt R."/>
            <person name="Palmer N."/>
            <person name="Adams M.D."/>
            <person name="Gocayne J.D."/>
            <person name="Weidman J.F."/>
            <person name="Utterback T.R."/>
            <person name="Watthey L."/>
            <person name="McDonald L.A."/>
            <person name="Artiach P."/>
            <person name="Bowman C."/>
            <person name="Garland S.A."/>
            <person name="Fujii C."/>
            <person name="Cotton M.D."/>
            <person name="Horst K."/>
            <person name="Roberts K.M."/>
            <person name="Hatch B."/>
            <person name="Smith H.O."/>
            <person name="Venter J.C."/>
        </authorList>
    </citation>
    <scope>NUCLEOTIDE SEQUENCE [LARGE SCALE GENOMIC DNA]</scope>
    <source>
        <strain>ATCC 35210 / DSM 4680 / CIP 102532 / B31</strain>
    </source>
</reference>
<feature type="chain" id="PRO_0000142406" description="Adenine deaminase">
    <location>
        <begin position="1"/>
        <end position="548"/>
    </location>
</feature>
<keyword id="KW-0378">Hydrolase</keyword>
<keyword id="KW-0464">Manganese</keyword>
<keyword id="KW-0614">Plasmid</keyword>
<keyword id="KW-1185">Reference proteome</keyword>
<comment type="catalytic activity">
    <reaction evidence="1">
        <text>adenine + H2O + H(+) = hypoxanthine + NH4(+)</text>
        <dbReference type="Rhea" id="RHEA:23688"/>
        <dbReference type="ChEBI" id="CHEBI:15377"/>
        <dbReference type="ChEBI" id="CHEBI:15378"/>
        <dbReference type="ChEBI" id="CHEBI:16708"/>
        <dbReference type="ChEBI" id="CHEBI:17368"/>
        <dbReference type="ChEBI" id="CHEBI:28938"/>
        <dbReference type="EC" id="3.5.4.2"/>
    </reaction>
</comment>
<comment type="cofactor">
    <cofactor evidence="1">
        <name>Mn(2+)</name>
        <dbReference type="ChEBI" id="CHEBI:29035"/>
    </cofactor>
</comment>
<comment type="similarity">
    <text evidence="1">Belongs to the metallo-dependent hydrolases superfamily. Adenine deaminase family.</text>
</comment>
<accession>O50821</accession>